<evidence type="ECO:0000255" key="1">
    <source>
        <dbReference type="HAMAP-Rule" id="MF_01904"/>
    </source>
</evidence>
<name>CAPPA_THEPD</name>
<comment type="function">
    <text evidence="1">Catalyzes the irreversible beta-carboxylation of phosphoenolpyruvate (PEP) to form oxaloacetate (OAA), a four-carbon dicarboxylic acid source for the tricarboxylic acid cycle.</text>
</comment>
<comment type="catalytic activity">
    <reaction evidence="1">
        <text>oxaloacetate + phosphate = phosphoenolpyruvate + hydrogencarbonate</text>
        <dbReference type="Rhea" id="RHEA:28370"/>
        <dbReference type="ChEBI" id="CHEBI:16452"/>
        <dbReference type="ChEBI" id="CHEBI:17544"/>
        <dbReference type="ChEBI" id="CHEBI:43474"/>
        <dbReference type="ChEBI" id="CHEBI:58702"/>
        <dbReference type="EC" id="4.1.1.31"/>
    </reaction>
</comment>
<comment type="cofactor">
    <cofactor evidence="1">
        <name>Mg(2+)</name>
        <dbReference type="ChEBI" id="CHEBI:18420"/>
    </cofactor>
</comment>
<comment type="subunit">
    <text evidence="1">Homotetramer.</text>
</comment>
<comment type="similarity">
    <text evidence="1">Belongs to the PEPCase type 2 family.</text>
</comment>
<organism>
    <name type="scientific">Thermofilum pendens (strain DSM 2475 / Hrk 5)</name>
    <dbReference type="NCBI Taxonomy" id="368408"/>
    <lineage>
        <taxon>Archaea</taxon>
        <taxon>Thermoproteota</taxon>
        <taxon>Thermoprotei</taxon>
        <taxon>Thermofilales</taxon>
        <taxon>Thermofilaceae</taxon>
        <taxon>Thermofilum</taxon>
    </lineage>
</organism>
<dbReference type="EC" id="4.1.1.31" evidence="1"/>
<dbReference type="EMBL" id="CP000505">
    <property type="protein sequence ID" value="ABL78663.1"/>
    <property type="molecule type" value="Genomic_DNA"/>
</dbReference>
<dbReference type="RefSeq" id="WP_011752928.1">
    <property type="nucleotide sequence ID" value="NC_008698.1"/>
</dbReference>
<dbReference type="SMR" id="A1RZN3"/>
<dbReference type="STRING" id="368408.Tpen_1265"/>
<dbReference type="EnsemblBacteria" id="ABL78663">
    <property type="protein sequence ID" value="ABL78663"/>
    <property type="gene ID" value="Tpen_1265"/>
</dbReference>
<dbReference type="GeneID" id="4600480"/>
<dbReference type="KEGG" id="tpe:Tpen_1265"/>
<dbReference type="eggNOG" id="arCOG04435">
    <property type="taxonomic scope" value="Archaea"/>
</dbReference>
<dbReference type="HOGENOM" id="CLU_517433_0_0_2"/>
<dbReference type="OrthoDB" id="85849at2157"/>
<dbReference type="Proteomes" id="UP000000641">
    <property type="component" value="Chromosome"/>
</dbReference>
<dbReference type="GO" id="GO:0000287">
    <property type="term" value="F:magnesium ion binding"/>
    <property type="evidence" value="ECO:0007669"/>
    <property type="project" value="UniProtKB-UniRule"/>
</dbReference>
<dbReference type="GO" id="GO:0008964">
    <property type="term" value="F:phosphoenolpyruvate carboxylase activity"/>
    <property type="evidence" value="ECO:0007669"/>
    <property type="project" value="UniProtKB-UniRule"/>
</dbReference>
<dbReference type="GO" id="GO:0015977">
    <property type="term" value="P:carbon fixation"/>
    <property type="evidence" value="ECO:0007669"/>
    <property type="project" value="UniProtKB-UniRule"/>
</dbReference>
<dbReference type="GO" id="GO:0006107">
    <property type="term" value="P:oxaloacetate metabolic process"/>
    <property type="evidence" value="ECO:0007669"/>
    <property type="project" value="UniProtKB-UniRule"/>
</dbReference>
<dbReference type="GO" id="GO:0006099">
    <property type="term" value="P:tricarboxylic acid cycle"/>
    <property type="evidence" value="ECO:0007669"/>
    <property type="project" value="InterPro"/>
</dbReference>
<dbReference type="HAMAP" id="MF_01904">
    <property type="entry name" value="PEPcase_type2"/>
    <property type="match status" value="1"/>
</dbReference>
<dbReference type="InterPro" id="IPR007566">
    <property type="entry name" value="PEP_COase_arc-type"/>
</dbReference>
<dbReference type="InterPro" id="IPR015813">
    <property type="entry name" value="Pyrv/PenolPyrv_kinase-like_dom"/>
</dbReference>
<dbReference type="NCBIfam" id="TIGR02751">
    <property type="entry name" value="PEPCase_arch"/>
    <property type="match status" value="1"/>
</dbReference>
<dbReference type="Pfam" id="PF14010">
    <property type="entry name" value="PEPcase_2"/>
    <property type="match status" value="1"/>
</dbReference>
<dbReference type="PIRSF" id="PIRSF006677">
    <property type="entry name" value="UCP006677"/>
    <property type="match status" value="1"/>
</dbReference>
<dbReference type="SUPFAM" id="SSF51621">
    <property type="entry name" value="Phosphoenolpyruvate/pyruvate domain"/>
    <property type="match status" value="1"/>
</dbReference>
<sequence length="464" mass="51243">METPRLMCTQHPDSTVKVPVQEEVEEAVRSFLVYGCDEVMSDYEGKLTPYAQPKEIVVKAGELGVPVGEGFYVTVRAPNPRLEDFDRVDLALEAAVLANYYSYKRLGVQAVRWVVLPMTDSAETVRLVQRLLARKTRVLCEEVGQPCEQAQLVPLLEDVDSLLRVREILRDLHSALAELGSDPGVLRVFLGKSDSALKAGHIASALSLLYALGESAKAGEELGLEVKPILGGGSPPFRGGVNNPRLVGVEVQRYRGYSTVTVQSAVRYDASFSEYQEVRSKLLGGAGGEPGDAGGRVAELARLAASMYRSLASKYLDFVNEYARSVPTTRDRVSWREYGRALELEDKLFSAPRAIVYTAAWYSLGVPPTFLDADFVLEAYRGDFLDEVLGYLPGLEEEWRYDAQFYLPRLAGERLGEELVKKVDEALDAMGLRPEPLEPYEKLARTAPAELRALLLGKVRGFLG</sequence>
<protein>
    <recommendedName>
        <fullName evidence="1">Phosphoenolpyruvate carboxylase</fullName>
        <shortName evidence="1">PEPC</shortName>
        <shortName evidence="1">PEPCase</shortName>
        <ecNumber evidence="1">4.1.1.31</ecNumber>
    </recommendedName>
</protein>
<accession>A1RZN3</accession>
<reference key="1">
    <citation type="journal article" date="2008" name="J. Bacteriol.">
        <title>Genome sequence of Thermofilum pendens reveals an exceptional loss of biosynthetic pathways without genome reduction.</title>
        <authorList>
            <person name="Anderson I."/>
            <person name="Rodriguez J."/>
            <person name="Susanti D."/>
            <person name="Porat I."/>
            <person name="Reich C."/>
            <person name="Ulrich L.E."/>
            <person name="Elkins J.G."/>
            <person name="Mavromatis K."/>
            <person name="Lykidis A."/>
            <person name="Kim E."/>
            <person name="Thompson L.S."/>
            <person name="Nolan M."/>
            <person name="Land M."/>
            <person name="Copeland A."/>
            <person name="Lapidus A."/>
            <person name="Lucas S."/>
            <person name="Detter C."/>
            <person name="Zhulin I.B."/>
            <person name="Olsen G.J."/>
            <person name="Whitman W."/>
            <person name="Mukhopadhyay B."/>
            <person name="Bristow J."/>
            <person name="Kyrpides N."/>
        </authorList>
    </citation>
    <scope>NUCLEOTIDE SEQUENCE [LARGE SCALE GENOMIC DNA]</scope>
    <source>
        <strain>DSM 2475 / Hrk 5</strain>
    </source>
</reference>
<proteinExistence type="inferred from homology"/>
<feature type="chain" id="PRO_0000309617" description="Phosphoenolpyruvate carboxylase">
    <location>
        <begin position="1"/>
        <end position="464"/>
    </location>
</feature>
<keyword id="KW-0120">Carbon dioxide fixation</keyword>
<keyword id="KW-0456">Lyase</keyword>
<keyword id="KW-0460">Magnesium</keyword>
<keyword id="KW-1185">Reference proteome</keyword>
<gene>
    <name evidence="1" type="primary">ppcA</name>
    <name type="ordered locus">Tpen_1265</name>
</gene>